<protein>
    <recommendedName>
        <fullName evidence="1">UvrABC system protein C</fullName>
        <shortName evidence="1">Protein UvrC</shortName>
    </recommendedName>
    <alternativeName>
        <fullName evidence="1">Excinuclease ABC subunit C</fullName>
    </alternativeName>
</protein>
<proteinExistence type="inferred from homology"/>
<keyword id="KW-0963">Cytoplasm</keyword>
<keyword id="KW-0227">DNA damage</keyword>
<keyword id="KW-0228">DNA excision</keyword>
<keyword id="KW-0234">DNA repair</keyword>
<keyword id="KW-0267">Excision nuclease</keyword>
<keyword id="KW-0742">SOS response</keyword>
<feature type="chain" id="PRO_0000138333" description="UvrABC system protein C">
    <location>
        <begin position="1"/>
        <end position="610"/>
    </location>
</feature>
<feature type="domain" description="GIY-YIG" evidence="1">
    <location>
        <begin position="16"/>
        <end position="94"/>
    </location>
</feature>
<feature type="domain" description="UVR" evidence="1">
    <location>
        <begin position="204"/>
        <end position="239"/>
    </location>
</feature>
<gene>
    <name evidence="1" type="primary">uvrC</name>
    <name type="ordered locus">STY2154</name>
    <name type="ordered locus">t0930</name>
</gene>
<evidence type="ECO:0000255" key="1">
    <source>
        <dbReference type="HAMAP-Rule" id="MF_00203"/>
    </source>
</evidence>
<accession>Q8Z5T3</accession>
<comment type="function">
    <text evidence="1">The UvrABC repair system catalyzes the recognition and processing of DNA lesions. UvrC both incises the 5' and 3' sides of the lesion. The N-terminal half is responsible for the 3' incision and the C-terminal half is responsible for the 5' incision.</text>
</comment>
<comment type="subunit">
    <text evidence="1">Interacts with UvrB in an incision complex.</text>
</comment>
<comment type="subcellular location">
    <subcellularLocation>
        <location evidence="1">Cytoplasm</location>
    </subcellularLocation>
</comment>
<comment type="similarity">
    <text evidence="1">Belongs to the UvrC family.</text>
</comment>
<name>UVRC_SALTI</name>
<dbReference type="EMBL" id="AL513382">
    <property type="protein sequence ID" value="CAD05695.1"/>
    <property type="molecule type" value="Genomic_DNA"/>
</dbReference>
<dbReference type="EMBL" id="AE014613">
    <property type="protein sequence ID" value="AAO68607.1"/>
    <property type="molecule type" value="Genomic_DNA"/>
</dbReference>
<dbReference type="RefSeq" id="NP_456509.1">
    <property type="nucleotide sequence ID" value="NC_003198.1"/>
</dbReference>
<dbReference type="RefSeq" id="WP_001289473.1">
    <property type="nucleotide sequence ID" value="NZ_WSUR01000004.1"/>
</dbReference>
<dbReference type="SMR" id="Q8Z5T3"/>
<dbReference type="STRING" id="220341.gene:17586063"/>
<dbReference type="KEGG" id="stt:t0930"/>
<dbReference type="KEGG" id="sty:STY2154"/>
<dbReference type="PATRIC" id="fig|220341.7.peg.2166"/>
<dbReference type="eggNOG" id="COG0322">
    <property type="taxonomic scope" value="Bacteria"/>
</dbReference>
<dbReference type="HOGENOM" id="CLU_014841_3_0_6"/>
<dbReference type="OMA" id="HIECFDN"/>
<dbReference type="Proteomes" id="UP000000541">
    <property type="component" value="Chromosome"/>
</dbReference>
<dbReference type="Proteomes" id="UP000002670">
    <property type="component" value="Chromosome"/>
</dbReference>
<dbReference type="GO" id="GO:0005737">
    <property type="term" value="C:cytoplasm"/>
    <property type="evidence" value="ECO:0007669"/>
    <property type="project" value="UniProtKB-SubCell"/>
</dbReference>
<dbReference type="GO" id="GO:0009380">
    <property type="term" value="C:excinuclease repair complex"/>
    <property type="evidence" value="ECO:0007669"/>
    <property type="project" value="InterPro"/>
</dbReference>
<dbReference type="GO" id="GO:0003677">
    <property type="term" value="F:DNA binding"/>
    <property type="evidence" value="ECO:0007669"/>
    <property type="project" value="UniProtKB-UniRule"/>
</dbReference>
<dbReference type="GO" id="GO:0009381">
    <property type="term" value="F:excinuclease ABC activity"/>
    <property type="evidence" value="ECO:0007669"/>
    <property type="project" value="UniProtKB-UniRule"/>
</dbReference>
<dbReference type="GO" id="GO:0006289">
    <property type="term" value="P:nucleotide-excision repair"/>
    <property type="evidence" value="ECO:0007669"/>
    <property type="project" value="UniProtKB-UniRule"/>
</dbReference>
<dbReference type="GO" id="GO:0009432">
    <property type="term" value="P:SOS response"/>
    <property type="evidence" value="ECO:0007669"/>
    <property type="project" value="UniProtKB-UniRule"/>
</dbReference>
<dbReference type="CDD" id="cd10434">
    <property type="entry name" value="GIY-YIG_UvrC_Cho"/>
    <property type="match status" value="1"/>
</dbReference>
<dbReference type="FunFam" id="1.10.150.20:FF:000005">
    <property type="entry name" value="UvrABC system protein C"/>
    <property type="match status" value="1"/>
</dbReference>
<dbReference type="FunFam" id="3.30.420.340:FF:000001">
    <property type="entry name" value="UvrABC system protein C"/>
    <property type="match status" value="1"/>
</dbReference>
<dbReference type="FunFam" id="3.40.1440.10:FF:000001">
    <property type="entry name" value="UvrABC system protein C"/>
    <property type="match status" value="1"/>
</dbReference>
<dbReference type="FunFam" id="4.10.860.10:FF:000002">
    <property type="entry name" value="UvrABC system protein C"/>
    <property type="match status" value="1"/>
</dbReference>
<dbReference type="Gene3D" id="1.10.150.20">
    <property type="entry name" value="5' to 3' exonuclease, C-terminal subdomain"/>
    <property type="match status" value="1"/>
</dbReference>
<dbReference type="Gene3D" id="3.40.1440.10">
    <property type="entry name" value="GIY-YIG endonuclease"/>
    <property type="match status" value="1"/>
</dbReference>
<dbReference type="Gene3D" id="4.10.860.10">
    <property type="entry name" value="UVR domain"/>
    <property type="match status" value="1"/>
</dbReference>
<dbReference type="Gene3D" id="3.30.420.340">
    <property type="entry name" value="UvrC, RNAse H endonuclease domain"/>
    <property type="match status" value="1"/>
</dbReference>
<dbReference type="HAMAP" id="MF_00203">
    <property type="entry name" value="UvrC"/>
    <property type="match status" value="1"/>
</dbReference>
<dbReference type="InterPro" id="IPR000305">
    <property type="entry name" value="GIY-YIG_endonuc"/>
</dbReference>
<dbReference type="InterPro" id="IPR035901">
    <property type="entry name" value="GIY-YIG_endonuc_sf"/>
</dbReference>
<dbReference type="InterPro" id="IPR047296">
    <property type="entry name" value="GIY-YIG_UvrC_Cho"/>
</dbReference>
<dbReference type="InterPro" id="IPR003583">
    <property type="entry name" value="Hlx-hairpin-Hlx_DNA-bd_motif"/>
</dbReference>
<dbReference type="InterPro" id="IPR010994">
    <property type="entry name" value="RuvA_2-like"/>
</dbReference>
<dbReference type="InterPro" id="IPR001943">
    <property type="entry name" value="UVR_dom"/>
</dbReference>
<dbReference type="InterPro" id="IPR036876">
    <property type="entry name" value="UVR_dom_sf"/>
</dbReference>
<dbReference type="InterPro" id="IPR050066">
    <property type="entry name" value="UvrABC_protein_C"/>
</dbReference>
<dbReference type="InterPro" id="IPR004791">
    <property type="entry name" value="UvrC"/>
</dbReference>
<dbReference type="InterPro" id="IPR001162">
    <property type="entry name" value="UvrC_RNase_H_dom"/>
</dbReference>
<dbReference type="InterPro" id="IPR038476">
    <property type="entry name" value="UvrC_RNase_H_dom_sf"/>
</dbReference>
<dbReference type="NCBIfam" id="NF001824">
    <property type="entry name" value="PRK00558.1-5"/>
    <property type="match status" value="1"/>
</dbReference>
<dbReference type="NCBIfam" id="TIGR00194">
    <property type="entry name" value="uvrC"/>
    <property type="match status" value="1"/>
</dbReference>
<dbReference type="PANTHER" id="PTHR30562:SF1">
    <property type="entry name" value="UVRABC SYSTEM PROTEIN C"/>
    <property type="match status" value="1"/>
</dbReference>
<dbReference type="PANTHER" id="PTHR30562">
    <property type="entry name" value="UVRC/OXIDOREDUCTASE"/>
    <property type="match status" value="1"/>
</dbReference>
<dbReference type="Pfam" id="PF01541">
    <property type="entry name" value="GIY-YIG"/>
    <property type="match status" value="1"/>
</dbReference>
<dbReference type="Pfam" id="PF14520">
    <property type="entry name" value="HHH_5"/>
    <property type="match status" value="1"/>
</dbReference>
<dbReference type="Pfam" id="PF02151">
    <property type="entry name" value="UVR"/>
    <property type="match status" value="1"/>
</dbReference>
<dbReference type="Pfam" id="PF22920">
    <property type="entry name" value="UvrC_RNaseH"/>
    <property type="match status" value="1"/>
</dbReference>
<dbReference type="Pfam" id="PF08459">
    <property type="entry name" value="UvrC_RNaseH_dom"/>
    <property type="match status" value="1"/>
</dbReference>
<dbReference type="SMART" id="SM00465">
    <property type="entry name" value="GIYc"/>
    <property type="match status" value="1"/>
</dbReference>
<dbReference type="SMART" id="SM00278">
    <property type="entry name" value="HhH1"/>
    <property type="match status" value="2"/>
</dbReference>
<dbReference type="SUPFAM" id="SSF46600">
    <property type="entry name" value="C-terminal UvrC-binding domain of UvrB"/>
    <property type="match status" value="1"/>
</dbReference>
<dbReference type="SUPFAM" id="SSF82771">
    <property type="entry name" value="GIY-YIG endonuclease"/>
    <property type="match status" value="1"/>
</dbReference>
<dbReference type="SUPFAM" id="SSF47781">
    <property type="entry name" value="RuvA domain 2-like"/>
    <property type="match status" value="1"/>
</dbReference>
<dbReference type="PROSITE" id="PS50164">
    <property type="entry name" value="GIY_YIG"/>
    <property type="match status" value="1"/>
</dbReference>
<dbReference type="PROSITE" id="PS50151">
    <property type="entry name" value="UVR"/>
    <property type="match status" value="1"/>
</dbReference>
<dbReference type="PROSITE" id="PS50165">
    <property type="entry name" value="UVRC"/>
    <property type="match status" value="1"/>
</dbReference>
<reference key="1">
    <citation type="journal article" date="2001" name="Nature">
        <title>Complete genome sequence of a multiple drug resistant Salmonella enterica serovar Typhi CT18.</title>
        <authorList>
            <person name="Parkhill J."/>
            <person name="Dougan G."/>
            <person name="James K.D."/>
            <person name="Thomson N.R."/>
            <person name="Pickard D."/>
            <person name="Wain J."/>
            <person name="Churcher C.M."/>
            <person name="Mungall K.L."/>
            <person name="Bentley S.D."/>
            <person name="Holden M.T.G."/>
            <person name="Sebaihia M."/>
            <person name="Baker S."/>
            <person name="Basham D."/>
            <person name="Brooks K."/>
            <person name="Chillingworth T."/>
            <person name="Connerton P."/>
            <person name="Cronin A."/>
            <person name="Davis P."/>
            <person name="Davies R.M."/>
            <person name="Dowd L."/>
            <person name="White N."/>
            <person name="Farrar J."/>
            <person name="Feltwell T."/>
            <person name="Hamlin N."/>
            <person name="Haque A."/>
            <person name="Hien T.T."/>
            <person name="Holroyd S."/>
            <person name="Jagels K."/>
            <person name="Krogh A."/>
            <person name="Larsen T.S."/>
            <person name="Leather S."/>
            <person name="Moule S."/>
            <person name="O'Gaora P."/>
            <person name="Parry C."/>
            <person name="Quail M.A."/>
            <person name="Rutherford K.M."/>
            <person name="Simmonds M."/>
            <person name="Skelton J."/>
            <person name="Stevens K."/>
            <person name="Whitehead S."/>
            <person name="Barrell B.G."/>
        </authorList>
    </citation>
    <scope>NUCLEOTIDE SEQUENCE [LARGE SCALE GENOMIC DNA]</scope>
    <source>
        <strain>CT18</strain>
    </source>
</reference>
<reference key="2">
    <citation type="journal article" date="2003" name="J. Bacteriol.">
        <title>Comparative genomics of Salmonella enterica serovar Typhi strains Ty2 and CT18.</title>
        <authorList>
            <person name="Deng W."/>
            <person name="Liou S.-R."/>
            <person name="Plunkett G. III"/>
            <person name="Mayhew G.F."/>
            <person name="Rose D.J."/>
            <person name="Burland V."/>
            <person name="Kodoyianni V."/>
            <person name="Schwartz D.C."/>
            <person name="Blattner F.R."/>
        </authorList>
    </citation>
    <scope>NUCLEOTIDE SEQUENCE [LARGE SCALE GENOMIC DNA]</scope>
    <source>
        <strain>ATCC 700931 / Ty2</strain>
    </source>
</reference>
<organism>
    <name type="scientific">Salmonella typhi</name>
    <dbReference type="NCBI Taxonomy" id="90370"/>
    <lineage>
        <taxon>Bacteria</taxon>
        <taxon>Pseudomonadati</taxon>
        <taxon>Pseudomonadota</taxon>
        <taxon>Gammaproteobacteria</taxon>
        <taxon>Enterobacterales</taxon>
        <taxon>Enterobacteriaceae</taxon>
        <taxon>Salmonella</taxon>
    </lineage>
</organism>
<sequence>MSEIFDAKAFLKTVTSQPGVYRMYDAGGTVIYVGKAKDLKKRLSSYFRSNLASRKTEALVAQIQHIDVTVTHTETEALLLEHNYIKLYQPRYNVLLRDDKSYPFIFLSGDTHPRLAMHRGAKHAKGEYFGPFPNGYAVRETLALLQKIFPIRQCENSVYRNRSRPCLQYQIGRCLGPCVAGLVSEEEYTQQVEYVRLFLSGKDDQVLTQLIARMEKASQDLAFEEAARIRDQIQAVRRVTEKQFVSNAGDDLDVIGVAFDAGMACVHVLFIRQGKVLGSRSYFPKVPGGTELGEVVETFVGQFYLQGSQMRTLPGEILLDFNLSDKTLLADSLSELAGRRIHVQTKPRGDRARYLKLARTNAATALVTKLSQQSTITQRLTALATVLKLPAIKRMECFDISHTMGEQTVASCVVFDANGPLRAEYRRYNIAGITPGDDYAAMNQVLRRRYGKAIEESKIPDVILIDGGKGQLAQAKAVFAELDVPWDKHRPLLLGVAKGADRKAGLETLFFEPEGEGFSLPPDSPALHVIQHIRDESHDHAIGGHRKKRAKVKNTSTLETIEGVGPKRRQMLLKYMGGLQGLRNASVEEIAKVPGISQGLAEKIFWSLKH</sequence>